<dbReference type="EMBL" id="AL009126">
    <property type="protein sequence ID" value="CAB13005.2"/>
    <property type="molecule type" value="Genomic_DNA"/>
</dbReference>
<dbReference type="PIR" id="B69843">
    <property type="entry name" value="B69843"/>
</dbReference>
<dbReference type="RefSeq" id="NP_389030.2">
    <property type="nucleotide sequence ID" value="NC_000964.3"/>
</dbReference>
<dbReference type="RefSeq" id="WP_010886478.1">
    <property type="nucleotide sequence ID" value="NZ_OZ025638.1"/>
</dbReference>
<dbReference type="SMR" id="O31600"/>
<dbReference type="FunCoup" id="O31600">
    <property type="interactions" value="23"/>
</dbReference>
<dbReference type="STRING" id="224308.BSU11480"/>
<dbReference type="TCDB" id="2.A.1.21.13">
    <property type="family name" value="the major facilitator superfamily (mfs)"/>
</dbReference>
<dbReference type="PaxDb" id="224308-BSU11480"/>
<dbReference type="EnsemblBacteria" id="CAB13005">
    <property type="protein sequence ID" value="CAB13005"/>
    <property type="gene ID" value="BSU_11480"/>
</dbReference>
<dbReference type="GeneID" id="936399"/>
<dbReference type="KEGG" id="bsu:BSU11480"/>
<dbReference type="PATRIC" id="fig|224308.43.peg.1199"/>
<dbReference type="eggNOG" id="COG2814">
    <property type="taxonomic scope" value="Bacteria"/>
</dbReference>
<dbReference type="InParanoid" id="O31600"/>
<dbReference type="OrthoDB" id="2351575at2"/>
<dbReference type="BioCyc" id="BSUB:BSU11480-MONOMER"/>
<dbReference type="Proteomes" id="UP000001570">
    <property type="component" value="Chromosome"/>
</dbReference>
<dbReference type="GO" id="GO:0005886">
    <property type="term" value="C:plasma membrane"/>
    <property type="evidence" value="ECO:0000318"/>
    <property type="project" value="GO_Central"/>
</dbReference>
<dbReference type="GO" id="GO:0015562">
    <property type="term" value="F:efflux transmembrane transporter activity"/>
    <property type="evidence" value="ECO:0000318"/>
    <property type="project" value="GO_Central"/>
</dbReference>
<dbReference type="GO" id="GO:0046677">
    <property type="term" value="P:response to antibiotic"/>
    <property type="evidence" value="ECO:0000318"/>
    <property type="project" value="GO_Central"/>
</dbReference>
<dbReference type="CDD" id="cd06173">
    <property type="entry name" value="MFS_MefA_like"/>
    <property type="match status" value="1"/>
</dbReference>
<dbReference type="Gene3D" id="1.20.1250.20">
    <property type="entry name" value="MFS general substrate transporter like domains"/>
    <property type="match status" value="1"/>
</dbReference>
<dbReference type="InterPro" id="IPR011701">
    <property type="entry name" value="MFS"/>
</dbReference>
<dbReference type="InterPro" id="IPR036259">
    <property type="entry name" value="MFS_trans_sf"/>
</dbReference>
<dbReference type="PANTHER" id="PTHR23513">
    <property type="entry name" value="INTEGRAL MEMBRANE EFFLUX PROTEIN-RELATED"/>
    <property type="match status" value="1"/>
</dbReference>
<dbReference type="PANTHER" id="PTHR23513:SF19">
    <property type="entry name" value="MAJOR FACILITATOR SUPERFAMILY (MFS) PROFILE DOMAIN-CONTAINING PROTEIN"/>
    <property type="match status" value="1"/>
</dbReference>
<dbReference type="Pfam" id="PF07690">
    <property type="entry name" value="MFS_1"/>
    <property type="match status" value="1"/>
</dbReference>
<dbReference type="SUPFAM" id="SSF103473">
    <property type="entry name" value="MFS general substrate transporter"/>
    <property type="match status" value="1"/>
</dbReference>
<proteinExistence type="inferred from homology"/>
<reference key="1">
    <citation type="journal article" date="1997" name="Nature">
        <title>The complete genome sequence of the Gram-positive bacterium Bacillus subtilis.</title>
        <authorList>
            <person name="Kunst F."/>
            <person name="Ogasawara N."/>
            <person name="Moszer I."/>
            <person name="Albertini A.M."/>
            <person name="Alloni G."/>
            <person name="Azevedo V."/>
            <person name="Bertero M.G."/>
            <person name="Bessieres P."/>
            <person name="Bolotin A."/>
            <person name="Borchert S."/>
            <person name="Borriss R."/>
            <person name="Boursier L."/>
            <person name="Brans A."/>
            <person name="Braun M."/>
            <person name="Brignell S.C."/>
            <person name="Bron S."/>
            <person name="Brouillet S."/>
            <person name="Bruschi C.V."/>
            <person name="Caldwell B."/>
            <person name="Capuano V."/>
            <person name="Carter N.M."/>
            <person name="Choi S.-K."/>
            <person name="Codani J.-J."/>
            <person name="Connerton I.F."/>
            <person name="Cummings N.J."/>
            <person name="Daniel R.A."/>
            <person name="Denizot F."/>
            <person name="Devine K.M."/>
            <person name="Duesterhoeft A."/>
            <person name="Ehrlich S.D."/>
            <person name="Emmerson P.T."/>
            <person name="Entian K.-D."/>
            <person name="Errington J."/>
            <person name="Fabret C."/>
            <person name="Ferrari E."/>
            <person name="Foulger D."/>
            <person name="Fritz C."/>
            <person name="Fujita M."/>
            <person name="Fujita Y."/>
            <person name="Fuma S."/>
            <person name="Galizzi A."/>
            <person name="Galleron N."/>
            <person name="Ghim S.-Y."/>
            <person name="Glaser P."/>
            <person name="Goffeau A."/>
            <person name="Golightly E.J."/>
            <person name="Grandi G."/>
            <person name="Guiseppi G."/>
            <person name="Guy B.J."/>
            <person name="Haga K."/>
            <person name="Haiech J."/>
            <person name="Harwood C.R."/>
            <person name="Henaut A."/>
            <person name="Hilbert H."/>
            <person name="Holsappel S."/>
            <person name="Hosono S."/>
            <person name="Hullo M.-F."/>
            <person name="Itaya M."/>
            <person name="Jones L.-M."/>
            <person name="Joris B."/>
            <person name="Karamata D."/>
            <person name="Kasahara Y."/>
            <person name="Klaerr-Blanchard M."/>
            <person name="Klein C."/>
            <person name="Kobayashi Y."/>
            <person name="Koetter P."/>
            <person name="Koningstein G."/>
            <person name="Krogh S."/>
            <person name="Kumano M."/>
            <person name="Kurita K."/>
            <person name="Lapidus A."/>
            <person name="Lardinois S."/>
            <person name="Lauber J."/>
            <person name="Lazarevic V."/>
            <person name="Lee S.-M."/>
            <person name="Levine A."/>
            <person name="Liu H."/>
            <person name="Masuda S."/>
            <person name="Mauel C."/>
            <person name="Medigue C."/>
            <person name="Medina N."/>
            <person name="Mellado R.P."/>
            <person name="Mizuno M."/>
            <person name="Moestl D."/>
            <person name="Nakai S."/>
            <person name="Noback M."/>
            <person name="Noone D."/>
            <person name="O'Reilly M."/>
            <person name="Ogawa K."/>
            <person name="Ogiwara A."/>
            <person name="Oudega B."/>
            <person name="Park S.-H."/>
            <person name="Parro V."/>
            <person name="Pohl T.M."/>
            <person name="Portetelle D."/>
            <person name="Porwollik S."/>
            <person name="Prescott A.M."/>
            <person name="Presecan E."/>
            <person name="Pujic P."/>
            <person name="Purnelle B."/>
            <person name="Rapoport G."/>
            <person name="Rey M."/>
            <person name="Reynolds S."/>
            <person name="Rieger M."/>
            <person name="Rivolta C."/>
            <person name="Rocha E."/>
            <person name="Roche B."/>
            <person name="Rose M."/>
            <person name="Sadaie Y."/>
            <person name="Sato T."/>
            <person name="Scanlan E."/>
            <person name="Schleich S."/>
            <person name="Schroeter R."/>
            <person name="Scoffone F."/>
            <person name="Sekiguchi J."/>
            <person name="Sekowska A."/>
            <person name="Seror S.J."/>
            <person name="Serror P."/>
            <person name="Shin B.-S."/>
            <person name="Soldo B."/>
            <person name="Sorokin A."/>
            <person name="Tacconi E."/>
            <person name="Takagi T."/>
            <person name="Takahashi H."/>
            <person name="Takemaru K."/>
            <person name="Takeuchi M."/>
            <person name="Tamakoshi A."/>
            <person name="Tanaka T."/>
            <person name="Terpstra P."/>
            <person name="Tognoni A."/>
            <person name="Tosato V."/>
            <person name="Uchiyama S."/>
            <person name="Vandenbol M."/>
            <person name="Vannier F."/>
            <person name="Vassarotti A."/>
            <person name="Viari A."/>
            <person name="Wambutt R."/>
            <person name="Wedler E."/>
            <person name="Wedler H."/>
            <person name="Weitzenegger T."/>
            <person name="Winters P."/>
            <person name="Wipat A."/>
            <person name="Yamamoto H."/>
            <person name="Yamane K."/>
            <person name="Yasumoto K."/>
            <person name="Yata K."/>
            <person name="Yoshida K."/>
            <person name="Yoshikawa H.-F."/>
            <person name="Zumstein E."/>
            <person name="Yoshikawa H."/>
            <person name="Danchin A."/>
        </authorList>
    </citation>
    <scope>NUCLEOTIDE SEQUENCE [LARGE SCALE GENOMIC DNA]</scope>
    <source>
        <strain>168</strain>
    </source>
</reference>
<evidence type="ECO:0000255" key="1"/>
<evidence type="ECO:0000305" key="2"/>
<protein>
    <recommendedName>
        <fullName>Uncharacterized MFS-type transporter YjbB</fullName>
    </recommendedName>
</protein>
<comment type="subcellular location">
    <subcellularLocation>
        <location evidence="2">Cell membrane</location>
        <topology evidence="2">Multi-pass membrane protein</topology>
    </subcellularLocation>
</comment>
<comment type="similarity">
    <text evidence="2">Belongs to the major facilitator superfamily. Drug:H(+) antiporter-3 (DHA3) (TC 2.A.1.21) family.</text>
</comment>
<organism>
    <name type="scientific">Bacillus subtilis (strain 168)</name>
    <dbReference type="NCBI Taxonomy" id="224308"/>
    <lineage>
        <taxon>Bacteria</taxon>
        <taxon>Bacillati</taxon>
        <taxon>Bacillota</taxon>
        <taxon>Bacilli</taxon>
        <taxon>Bacillales</taxon>
        <taxon>Bacillaceae</taxon>
        <taxon>Bacillus</taxon>
    </lineage>
</organism>
<feature type="chain" id="PRO_0000360726" description="Uncharacterized MFS-type transporter YjbB">
    <location>
        <begin position="1"/>
        <end position="405"/>
    </location>
</feature>
<feature type="transmembrane region" description="Helical" evidence="1">
    <location>
        <begin position="9"/>
        <end position="29"/>
    </location>
</feature>
<feature type="transmembrane region" description="Helical" evidence="1">
    <location>
        <begin position="41"/>
        <end position="61"/>
    </location>
</feature>
<feature type="transmembrane region" description="Helical" evidence="1">
    <location>
        <begin position="74"/>
        <end position="94"/>
    </location>
</feature>
<feature type="transmembrane region" description="Helical" evidence="1">
    <location>
        <begin position="98"/>
        <end position="118"/>
    </location>
</feature>
<feature type="transmembrane region" description="Helical" evidence="1">
    <location>
        <begin position="138"/>
        <end position="158"/>
    </location>
</feature>
<feature type="transmembrane region" description="Helical" evidence="1">
    <location>
        <begin position="168"/>
        <end position="190"/>
    </location>
</feature>
<feature type="transmembrane region" description="Helical" evidence="1">
    <location>
        <begin position="227"/>
        <end position="247"/>
    </location>
</feature>
<feature type="transmembrane region" description="Helical" evidence="1">
    <location>
        <begin position="252"/>
        <end position="272"/>
    </location>
</feature>
<feature type="transmembrane region" description="Helical" evidence="1">
    <location>
        <begin position="291"/>
        <end position="311"/>
    </location>
</feature>
<feature type="transmembrane region" description="Helical" evidence="1">
    <location>
        <begin position="373"/>
        <end position="393"/>
    </location>
</feature>
<accession>O31600</accession>
<sequence length="405" mass="44239">MQFLHNKNVFALLLSQSFQSLAGVLVTIVLMVRIYQMTDSVFLAGLILSFMSFASIAASFCVSPVLRILGFKKVLAGANLLRAVFIILMAYSVTHHGQAFFWITLLFVFCFSFAGAFFQPARFALLPIIVPKKQYVKANGVISLSNQLFLTAGWGLGGLLTYAVPFELVVGAAICLFVLSGASISVLHVNEEEAAGTAETASVRSIWKDLMIIPIVRDITVMDMLEALAGSVWSSAILLAFTAAVLHETEVWWGMFNASYFIGAIVGSVIAIRFSSFFERNMGYAIMFSSLVMSALTLLFSFSPVPFLCALACAAMGPFYQVRDICQETMLQEVIPEQKRIGIMAAKNAILTPWSGVTYSIMGLVADAAGAKIAFIAAAALYIMTFLIALAQPRLVHYRRENRVQ</sequence>
<keyword id="KW-1003">Cell membrane</keyword>
<keyword id="KW-0472">Membrane</keyword>
<keyword id="KW-1185">Reference proteome</keyword>
<keyword id="KW-0812">Transmembrane</keyword>
<keyword id="KW-1133">Transmembrane helix</keyword>
<keyword id="KW-0813">Transport</keyword>
<name>YJBB_BACSU</name>
<gene>
    <name type="primary">yjbB</name>
    <name type="ordered locus">BSU11480</name>
</gene>